<reference key="1">
    <citation type="journal article" date="2001" name="Nature">
        <title>Genome sequence of Yersinia pestis, the causative agent of plague.</title>
        <authorList>
            <person name="Parkhill J."/>
            <person name="Wren B.W."/>
            <person name="Thomson N.R."/>
            <person name="Titball R.W."/>
            <person name="Holden M.T.G."/>
            <person name="Prentice M.B."/>
            <person name="Sebaihia M."/>
            <person name="James K.D."/>
            <person name="Churcher C.M."/>
            <person name="Mungall K.L."/>
            <person name="Baker S."/>
            <person name="Basham D."/>
            <person name="Bentley S.D."/>
            <person name="Brooks K."/>
            <person name="Cerdeno-Tarraga A.-M."/>
            <person name="Chillingworth T."/>
            <person name="Cronin A."/>
            <person name="Davies R.M."/>
            <person name="Davis P."/>
            <person name="Dougan G."/>
            <person name="Feltwell T."/>
            <person name="Hamlin N."/>
            <person name="Holroyd S."/>
            <person name="Jagels K."/>
            <person name="Karlyshev A.V."/>
            <person name="Leather S."/>
            <person name="Moule S."/>
            <person name="Oyston P.C.F."/>
            <person name="Quail M.A."/>
            <person name="Rutherford K.M."/>
            <person name="Simmonds M."/>
            <person name="Skelton J."/>
            <person name="Stevens K."/>
            <person name="Whitehead S."/>
            <person name="Barrell B.G."/>
        </authorList>
    </citation>
    <scope>NUCLEOTIDE SEQUENCE [LARGE SCALE GENOMIC DNA]</scope>
    <source>
        <strain>CO-92 / Biovar Orientalis</strain>
    </source>
</reference>
<reference key="2">
    <citation type="journal article" date="2002" name="J. Bacteriol.">
        <title>Genome sequence of Yersinia pestis KIM.</title>
        <authorList>
            <person name="Deng W."/>
            <person name="Burland V."/>
            <person name="Plunkett G. III"/>
            <person name="Boutin A."/>
            <person name="Mayhew G.F."/>
            <person name="Liss P."/>
            <person name="Perna N.T."/>
            <person name="Rose D.J."/>
            <person name="Mau B."/>
            <person name="Zhou S."/>
            <person name="Schwartz D.C."/>
            <person name="Fetherston J.D."/>
            <person name="Lindler L.E."/>
            <person name="Brubaker R.R."/>
            <person name="Plano G.V."/>
            <person name="Straley S.C."/>
            <person name="McDonough K.A."/>
            <person name="Nilles M.L."/>
            <person name="Matson J.S."/>
            <person name="Blattner F.R."/>
            <person name="Perry R.D."/>
        </authorList>
    </citation>
    <scope>NUCLEOTIDE SEQUENCE [LARGE SCALE GENOMIC DNA]</scope>
    <source>
        <strain>KIM10+ / Biovar Mediaevalis</strain>
    </source>
</reference>
<reference key="3">
    <citation type="journal article" date="2004" name="DNA Res.">
        <title>Complete genome sequence of Yersinia pestis strain 91001, an isolate avirulent to humans.</title>
        <authorList>
            <person name="Song Y."/>
            <person name="Tong Z."/>
            <person name="Wang J."/>
            <person name="Wang L."/>
            <person name="Guo Z."/>
            <person name="Han Y."/>
            <person name="Zhang J."/>
            <person name="Pei D."/>
            <person name="Zhou D."/>
            <person name="Qin H."/>
            <person name="Pang X."/>
            <person name="Han Y."/>
            <person name="Zhai J."/>
            <person name="Li M."/>
            <person name="Cui B."/>
            <person name="Qi Z."/>
            <person name="Jin L."/>
            <person name="Dai R."/>
            <person name="Chen F."/>
            <person name="Li S."/>
            <person name="Ye C."/>
            <person name="Du Z."/>
            <person name="Lin W."/>
            <person name="Wang J."/>
            <person name="Yu J."/>
            <person name="Yang H."/>
            <person name="Wang J."/>
            <person name="Huang P."/>
            <person name="Yang R."/>
        </authorList>
    </citation>
    <scope>NUCLEOTIDE SEQUENCE [LARGE SCALE GENOMIC DNA]</scope>
    <source>
        <strain>91001 / Biovar Mediaevalis</strain>
    </source>
</reference>
<keyword id="KW-0067">ATP-binding</keyword>
<keyword id="KW-0997">Cell inner membrane</keyword>
<keyword id="KW-1003">Cell membrane</keyword>
<keyword id="KW-0472">Membrane</keyword>
<keyword id="KW-0547">Nucleotide-binding</keyword>
<keyword id="KW-1185">Reference proteome</keyword>
<keyword id="KW-0764">Sulfate transport</keyword>
<keyword id="KW-1278">Translocase</keyword>
<keyword id="KW-0813">Transport</keyword>
<sequence length="363" mass="40673">MSIEINNISKYFGRTKVLNDITLDIPSGQMVALLGPSGSGKTTLLRIIAGLENQNAGRLSFHGTDVSRLHARDRRVGFVFQHYALFRHMTVFDNIAFGLTVLPRRERPNAAAIKQKVGQLLEMVQLGHLAERFPSQLSGGQKQRVALARALAVEPQILLLDEPFGALDAQVRKELRRWLRQLHEELKFTSVFVTHDQEEAMEVADRVVVVSQGNIEQVGTPDEVWREPATRFVLEFLGEVNRLSGEIRGSQLFIGAHHWPLDLAPMHQGSVDLFLRPWEMEVSTQSSDRCPLPVQVLEVSPRGHFWQLTVQPIGWHQDPISVVLPEGNIDAPVRGNRYYVGGLNARLYSGNQLLQPIALAQSA</sequence>
<evidence type="ECO:0000255" key="1">
    <source>
        <dbReference type="HAMAP-Rule" id="MF_01701"/>
    </source>
</evidence>
<evidence type="ECO:0000305" key="2"/>
<dbReference type="EC" id="7.3.2.3" evidence="1"/>
<dbReference type="EMBL" id="AL590842">
    <property type="protein sequence ID" value="CAL21615.1"/>
    <property type="molecule type" value="Genomic_DNA"/>
</dbReference>
<dbReference type="EMBL" id="AE009952">
    <property type="protein sequence ID" value="AAM85040.1"/>
    <property type="status" value="ALT_INIT"/>
    <property type="molecule type" value="Genomic_DNA"/>
</dbReference>
<dbReference type="EMBL" id="AE017042">
    <property type="protein sequence ID" value="AAS62828.1"/>
    <property type="molecule type" value="Genomic_DNA"/>
</dbReference>
<dbReference type="PIR" id="AD0366">
    <property type="entry name" value="AD0366"/>
</dbReference>
<dbReference type="RefSeq" id="WP_002208509.1">
    <property type="nucleotide sequence ID" value="NZ_WUCM01000010.1"/>
</dbReference>
<dbReference type="RefSeq" id="YP_002347934.1">
    <property type="nucleotide sequence ID" value="NC_003143.1"/>
</dbReference>
<dbReference type="SMR" id="Q8D0W8"/>
<dbReference type="STRING" id="214092.YPO3012"/>
<dbReference type="PaxDb" id="214092-YPO3012"/>
<dbReference type="DNASU" id="1146416"/>
<dbReference type="EnsemblBacteria" id="AAS62828">
    <property type="protein sequence ID" value="AAS62828"/>
    <property type="gene ID" value="YP_2636"/>
</dbReference>
<dbReference type="GeneID" id="57975686"/>
<dbReference type="KEGG" id="ype:YPO3012"/>
<dbReference type="KEGG" id="ypk:y1469"/>
<dbReference type="KEGG" id="ypm:YP_2636"/>
<dbReference type="PATRIC" id="fig|214092.21.peg.3466"/>
<dbReference type="eggNOG" id="COG1118">
    <property type="taxonomic scope" value="Bacteria"/>
</dbReference>
<dbReference type="HOGENOM" id="CLU_000604_1_1_6"/>
<dbReference type="OMA" id="AAFKHMT"/>
<dbReference type="OrthoDB" id="9802264at2"/>
<dbReference type="Proteomes" id="UP000000815">
    <property type="component" value="Chromosome"/>
</dbReference>
<dbReference type="Proteomes" id="UP000001019">
    <property type="component" value="Chromosome"/>
</dbReference>
<dbReference type="Proteomes" id="UP000002490">
    <property type="component" value="Chromosome"/>
</dbReference>
<dbReference type="GO" id="GO:0043190">
    <property type="term" value="C:ATP-binding cassette (ABC) transporter complex"/>
    <property type="evidence" value="ECO:0007669"/>
    <property type="project" value="InterPro"/>
</dbReference>
<dbReference type="GO" id="GO:0015419">
    <property type="term" value="F:ABC-type sulfate transporter activity"/>
    <property type="evidence" value="ECO:0007669"/>
    <property type="project" value="InterPro"/>
</dbReference>
<dbReference type="GO" id="GO:0102025">
    <property type="term" value="F:ABC-type thiosulfate transporter activity"/>
    <property type="evidence" value="ECO:0007669"/>
    <property type="project" value="RHEA"/>
</dbReference>
<dbReference type="GO" id="GO:0005524">
    <property type="term" value="F:ATP binding"/>
    <property type="evidence" value="ECO:0007669"/>
    <property type="project" value="UniProtKB-KW"/>
</dbReference>
<dbReference type="GO" id="GO:0016887">
    <property type="term" value="F:ATP hydrolysis activity"/>
    <property type="evidence" value="ECO:0007669"/>
    <property type="project" value="InterPro"/>
</dbReference>
<dbReference type="GO" id="GO:1902358">
    <property type="term" value="P:sulfate transmembrane transport"/>
    <property type="evidence" value="ECO:0000318"/>
    <property type="project" value="GO_Central"/>
</dbReference>
<dbReference type="CDD" id="cd03296">
    <property type="entry name" value="ABC_CysA_sulfate_importer"/>
    <property type="match status" value="1"/>
</dbReference>
<dbReference type="FunFam" id="3.40.50.300:FF:000227">
    <property type="entry name" value="Sulfate/thiosulfate import ATP-binding protein CysA"/>
    <property type="match status" value="1"/>
</dbReference>
<dbReference type="Gene3D" id="3.40.50.300">
    <property type="entry name" value="P-loop containing nucleotide triphosphate hydrolases"/>
    <property type="match status" value="1"/>
</dbReference>
<dbReference type="InterPro" id="IPR003593">
    <property type="entry name" value="AAA+_ATPase"/>
</dbReference>
<dbReference type="InterPro" id="IPR050093">
    <property type="entry name" value="ABC_SmlMolc_Importer"/>
</dbReference>
<dbReference type="InterPro" id="IPR003439">
    <property type="entry name" value="ABC_transporter-like_ATP-bd"/>
</dbReference>
<dbReference type="InterPro" id="IPR017871">
    <property type="entry name" value="ABC_transporter-like_CS"/>
</dbReference>
<dbReference type="InterPro" id="IPR008995">
    <property type="entry name" value="Mo/tungstate-bd_C_term_dom"/>
</dbReference>
<dbReference type="InterPro" id="IPR027417">
    <property type="entry name" value="P-loop_NTPase"/>
</dbReference>
<dbReference type="InterPro" id="IPR005666">
    <property type="entry name" value="Sulph_transpt1"/>
</dbReference>
<dbReference type="NCBIfam" id="TIGR00968">
    <property type="entry name" value="3a0106s01"/>
    <property type="match status" value="1"/>
</dbReference>
<dbReference type="NCBIfam" id="NF008105">
    <property type="entry name" value="PRK10851.1"/>
    <property type="match status" value="1"/>
</dbReference>
<dbReference type="PANTHER" id="PTHR42781">
    <property type="entry name" value="SPERMIDINE/PUTRESCINE IMPORT ATP-BINDING PROTEIN POTA"/>
    <property type="match status" value="1"/>
</dbReference>
<dbReference type="PANTHER" id="PTHR42781:SF4">
    <property type="entry name" value="SPERMIDINE_PUTRESCINE IMPORT ATP-BINDING PROTEIN POTA"/>
    <property type="match status" value="1"/>
</dbReference>
<dbReference type="Pfam" id="PF00005">
    <property type="entry name" value="ABC_tran"/>
    <property type="match status" value="1"/>
</dbReference>
<dbReference type="SMART" id="SM00382">
    <property type="entry name" value="AAA"/>
    <property type="match status" value="1"/>
</dbReference>
<dbReference type="SUPFAM" id="SSF50331">
    <property type="entry name" value="MOP-like"/>
    <property type="match status" value="1"/>
</dbReference>
<dbReference type="SUPFAM" id="SSF52540">
    <property type="entry name" value="P-loop containing nucleoside triphosphate hydrolases"/>
    <property type="match status" value="1"/>
</dbReference>
<dbReference type="PROSITE" id="PS00211">
    <property type="entry name" value="ABC_TRANSPORTER_1"/>
    <property type="match status" value="1"/>
</dbReference>
<dbReference type="PROSITE" id="PS50893">
    <property type="entry name" value="ABC_TRANSPORTER_2"/>
    <property type="match status" value="1"/>
</dbReference>
<dbReference type="PROSITE" id="PS51237">
    <property type="entry name" value="CYSA"/>
    <property type="match status" value="1"/>
</dbReference>
<gene>
    <name evidence="1" type="primary">cysA</name>
    <name type="ordered locus">YPO3012</name>
    <name type="ordered locus">y1469</name>
    <name type="ordered locus">YP_2636</name>
</gene>
<protein>
    <recommendedName>
        <fullName evidence="1">Sulfate/thiosulfate import ATP-binding protein CysA</fullName>
        <ecNumber evidence="1">7.3.2.3</ecNumber>
    </recommendedName>
    <alternativeName>
        <fullName evidence="1">Sulfate-transporting ATPase</fullName>
    </alternativeName>
</protein>
<proteinExistence type="inferred from homology"/>
<feature type="chain" id="PRO_0000092304" description="Sulfate/thiosulfate import ATP-binding protein CysA">
    <location>
        <begin position="1"/>
        <end position="363"/>
    </location>
</feature>
<feature type="domain" description="ABC transporter" evidence="1">
    <location>
        <begin position="3"/>
        <end position="237"/>
    </location>
</feature>
<feature type="binding site" evidence="1">
    <location>
        <begin position="35"/>
        <end position="42"/>
    </location>
    <ligand>
        <name>ATP</name>
        <dbReference type="ChEBI" id="CHEBI:30616"/>
    </ligand>
</feature>
<comment type="function">
    <text evidence="1">Part of the ABC transporter complex CysAWTP involved in sulfate/thiosulfate import. Responsible for energy coupling to the transport system.</text>
</comment>
<comment type="catalytic activity">
    <reaction evidence="1">
        <text>sulfate(out) + ATP + H2O = sulfate(in) + ADP + phosphate + H(+)</text>
        <dbReference type="Rhea" id="RHEA:10192"/>
        <dbReference type="ChEBI" id="CHEBI:15377"/>
        <dbReference type="ChEBI" id="CHEBI:15378"/>
        <dbReference type="ChEBI" id="CHEBI:16189"/>
        <dbReference type="ChEBI" id="CHEBI:30616"/>
        <dbReference type="ChEBI" id="CHEBI:43474"/>
        <dbReference type="ChEBI" id="CHEBI:456216"/>
        <dbReference type="EC" id="7.3.2.3"/>
    </reaction>
</comment>
<comment type="catalytic activity">
    <reaction evidence="1">
        <text>thiosulfate(out) + ATP + H2O = thiosulfate(in) + ADP + phosphate + H(+)</text>
        <dbReference type="Rhea" id="RHEA:29871"/>
        <dbReference type="ChEBI" id="CHEBI:15377"/>
        <dbReference type="ChEBI" id="CHEBI:15378"/>
        <dbReference type="ChEBI" id="CHEBI:30616"/>
        <dbReference type="ChEBI" id="CHEBI:33542"/>
        <dbReference type="ChEBI" id="CHEBI:43474"/>
        <dbReference type="ChEBI" id="CHEBI:456216"/>
        <dbReference type="EC" id="7.3.2.3"/>
    </reaction>
</comment>
<comment type="subunit">
    <text evidence="1">The complex is composed of two ATP-binding proteins (CysA), two transmembrane proteins (CysT and CysW) and a solute-binding protein (CysP).</text>
</comment>
<comment type="subcellular location">
    <subcellularLocation>
        <location evidence="1">Cell inner membrane</location>
        <topology evidence="1">Peripheral membrane protein</topology>
    </subcellularLocation>
</comment>
<comment type="similarity">
    <text evidence="1">Belongs to the ABC transporter superfamily. Sulfate/tungstate importer (TC 3.A.1.6) family.</text>
</comment>
<comment type="sequence caution" evidence="2">
    <conflict type="erroneous initiation">
        <sequence resource="EMBL-CDS" id="AAM85040"/>
    </conflict>
</comment>
<organism>
    <name type="scientific">Yersinia pestis</name>
    <dbReference type="NCBI Taxonomy" id="632"/>
    <lineage>
        <taxon>Bacteria</taxon>
        <taxon>Pseudomonadati</taxon>
        <taxon>Pseudomonadota</taxon>
        <taxon>Gammaproteobacteria</taxon>
        <taxon>Enterobacterales</taxon>
        <taxon>Yersiniaceae</taxon>
        <taxon>Yersinia</taxon>
    </lineage>
</organism>
<name>CYSA_YERPE</name>
<accession>Q8D0W8</accession>
<accession>Q0WCQ4</accession>
<accession>Q8ZCH7</accession>